<comment type="function">
    <text evidence="1">Catalyzes the condensation of carbamoyl phosphate and aspartate to form carbamoyl aspartate and inorganic phosphate, the committed step in the de novo pyrimidine nucleotide biosynthesis pathway.</text>
</comment>
<comment type="catalytic activity">
    <reaction evidence="1">
        <text>carbamoyl phosphate + L-aspartate = N-carbamoyl-L-aspartate + phosphate + H(+)</text>
        <dbReference type="Rhea" id="RHEA:20013"/>
        <dbReference type="ChEBI" id="CHEBI:15378"/>
        <dbReference type="ChEBI" id="CHEBI:29991"/>
        <dbReference type="ChEBI" id="CHEBI:32814"/>
        <dbReference type="ChEBI" id="CHEBI:43474"/>
        <dbReference type="ChEBI" id="CHEBI:58228"/>
        <dbReference type="EC" id="2.1.3.2"/>
    </reaction>
</comment>
<comment type="pathway">
    <text evidence="1">Pyrimidine metabolism; UMP biosynthesis via de novo pathway; (S)-dihydroorotate from bicarbonate: step 2/3.</text>
</comment>
<comment type="subunit">
    <text evidence="1">Heterooligomer of catalytic and regulatory chains.</text>
</comment>
<comment type="similarity">
    <text evidence="1">Belongs to the aspartate/ornithine carbamoyltransferase superfamily. ATCase family.</text>
</comment>
<protein>
    <recommendedName>
        <fullName evidence="1">Aspartate carbamoyltransferase catalytic subunit</fullName>
        <ecNumber evidence="1">2.1.3.2</ecNumber>
    </recommendedName>
    <alternativeName>
        <fullName evidence="1">Aspartate transcarbamylase</fullName>
        <shortName evidence="1">ATCase</shortName>
    </alternativeName>
</protein>
<organism>
    <name type="scientific">Sulfurisphaera tokodaii (strain DSM 16993 / JCM 10545 / NBRC 100140 / 7)</name>
    <name type="common">Sulfolobus tokodaii</name>
    <dbReference type="NCBI Taxonomy" id="273063"/>
    <lineage>
        <taxon>Archaea</taxon>
        <taxon>Thermoproteota</taxon>
        <taxon>Thermoprotei</taxon>
        <taxon>Sulfolobales</taxon>
        <taxon>Sulfolobaceae</taxon>
        <taxon>Sulfurisphaera</taxon>
    </lineage>
</organism>
<proteinExistence type="inferred from homology"/>
<accession>Q970X2</accession>
<feature type="chain" id="PRO_0000113260" description="Aspartate carbamoyltransferase catalytic subunit">
    <location>
        <begin position="1"/>
        <end position="298"/>
    </location>
</feature>
<feature type="binding site" evidence="1">
    <location>
        <position position="50"/>
    </location>
    <ligand>
        <name>carbamoyl phosphate</name>
        <dbReference type="ChEBI" id="CHEBI:58228"/>
    </ligand>
</feature>
<feature type="binding site" evidence="1">
    <location>
        <position position="51"/>
    </location>
    <ligand>
        <name>carbamoyl phosphate</name>
        <dbReference type="ChEBI" id="CHEBI:58228"/>
    </ligand>
</feature>
<feature type="binding site" evidence="1">
    <location>
        <position position="79"/>
    </location>
    <ligand>
        <name>L-aspartate</name>
        <dbReference type="ChEBI" id="CHEBI:29991"/>
    </ligand>
</feature>
<feature type="binding site" evidence="1">
    <location>
        <position position="100"/>
    </location>
    <ligand>
        <name>carbamoyl phosphate</name>
        <dbReference type="ChEBI" id="CHEBI:58228"/>
    </ligand>
</feature>
<feature type="binding site" evidence="1">
    <location>
        <position position="128"/>
    </location>
    <ligand>
        <name>carbamoyl phosphate</name>
        <dbReference type="ChEBI" id="CHEBI:58228"/>
    </ligand>
</feature>
<feature type="binding site" evidence="1">
    <location>
        <position position="131"/>
    </location>
    <ligand>
        <name>carbamoyl phosphate</name>
        <dbReference type="ChEBI" id="CHEBI:58228"/>
    </ligand>
</feature>
<feature type="binding site" evidence="1">
    <location>
        <position position="161"/>
    </location>
    <ligand>
        <name>L-aspartate</name>
        <dbReference type="ChEBI" id="CHEBI:29991"/>
    </ligand>
</feature>
<feature type="binding site" evidence="1">
    <location>
        <position position="220"/>
    </location>
    <ligand>
        <name>L-aspartate</name>
        <dbReference type="ChEBI" id="CHEBI:29991"/>
    </ligand>
</feature>
<feature type="binding site" evidence="1">
    <location>
        <position position="259"/>
    </location>
    <ligand>
        <name>carbamoyl phosphate</name>
        <dbReference type="ChEBI" id="CHEBI:58228"/>
    </ligand>
</feature>
<feature type="binding site" evidence="1">
    <location>
        <position position="260"/>
    </location>
    <ligand>
        <name>carbamoyl phosphate</name>
        <dbReference type="ChEBI" id="CHEBI:58228"/>
    </ligand>
</feature>
<keyword id="KW-0665">Pyrimidine biosynthesis</keyword>
<keyword id="KW-1185">Reference proteome</keyword>
<keyword id="KW-0808">Transferase</keyword>
<reference key="1">
    <citation type="journal article" date="2001" name="DNA Res.">
        <title>Complete genome sequence of an aerobic thermoacidophilic Crenarchaeon, Sulfolobus tokodaii strain7.</title>
        <authorList>
            <person name="Kawarabayasi Y."/>
            <person name="Hino Y."/>
            <person name="Horikawa H."/>
            <person name="Jin-no K."/>
            <person name="Takahashi M."/>
            <person name="Sekine M."/>
            <person name="Baba S."/>
            <person name="Ankai A."/>
            <person name="Kosugi H."/>
            <person name="Hosoyama A."/>
            <person name="Fukui S."/>
            <person name="Nagai Y."/>
            <person name="Nishijima K."/>
            <person name="Otsuka R."/>
            <person name="Nakazawa H."/>
            <person name="Takamiya M."/>
            <person name="Kato Y."/>
            <person name="Yoshizawa T."/>
            <person name="Tanaka T."/>
            <person name="Kudoh Y."/>
            <person name="Yamazaki J."/>
            <person name="Kushida N."/>
            <person name="Oguchi A."/>
            <person name="Aoki K."/>
            <person name="Masuda S."/>
            <person name="Yanagii M."/>
            <person name="Nishimura M."/>
            <person name="Yamagishi A."/>
            <person name="Oshima T."/>
            <person name="Kikuchi H."/>
        </authorList>
    </citation>
    <scope>NUCLEOTIDE SEQUENCE [LARGE SCALE GENOMIC DNA]</scope>
    <source>
        <strain>DSM 16993 / JCM 10545 / NBRC 100140 / 7</strain>
    </source>
</reference>
<dbReference type="EC" id="2.1.3.2" evidence="1"/>
<dbReference type="EMBL" id="BA000023">
    <property type="protein sequence ID" value="BAB66551.1"/>
    <property type="molecule type" value="Genomic_DNA"/>
</dbReference>
<dbReference type="RefSeq" id="WP_010979529.1">
    <property type="nucleotide sequence ID" value="NC_003106.2"/>
</dbReference>
<dbReference type="SMR" id="Q970X2"/>
<dbReference type="STRING" id="273063.STK_14800"/>
<dbReference type="GeneID" id="1459515"/>
<dbReference type="KEGG" id="sto:STK_14800"/>
<dbReference type="PATRIC" id="fig|273063.9.peg.1687"/>
<dbReference type="eggNOG" id="arCOG00911">
    <property type="taxonomic scope" value="Archaea"/>
</dbReference>
<dbReference type="OrthoDB" id="7792at2157"/>
<dbReference type="UniPathway" id="UPA00070">
    <property type="reaction ID" value="UER00116"/>
</dbReference>
<dbReference type="Proteomes" id="UP000001015">
    <property type="component" value="Chromosome"/>
</dbReference>
<dbReference type="GO" id="GO:0016597">
    <property type="term" value="F:amino acid binding"/>
    <property type="evidence" value="ECO:0007669"/>
    <property type="project" value="InterPro"/>
</dbReference>
<dbReference type="GO" id="GO:0004070">
    <property type="term" value="F:aspartate carbamoyltransferase activity"/>
    <property type="evidence" value="ECO:0007669"/>
    <property type="project" value="UniProtKB-UniRule"/>
</dbReference>
<dbReference type="GO" id="GO:0006207">
    <property type="term" value="P:'de novo' pyrimidine nucleobase biosynthetic process"/>
    <property type="evidence" value="ECO:0007669"/>
    <property type="project" value="InterPro"/>
</dbReference>
<dbReference type="GO" id="GO:0044205">
    <property type="term" value="P:'de novo' UMP biosynthetic process"/>
    <property type="evidence" value="ECO:0007669"/>
    <property type="project" value="UniProtKB-UniRule"/>
</dbReference>
<dbReference type="GO" id="GO:0006520">
    <property type="term" value="P:amino acid metabolic process"/>
    <property type="evidence" value="ECO:0007669"/>
    <property type="project" value="InterPro"/>
</dbReference>
<dbReference type="FunFam" id="3.40.50.1370:FF:000002">
    <property type="entry name" value="Aspartate carbamoyltransferase 2"/>
    <property type="match status" value="1"/>
</dbReference>
<dbReference type="Gene3D" id="3.40.50.1370">
    <property type="entry name" value="Aspartate/ornithine carbamoyltransferase"/>
    <property type="match status" value="2"/>
</dbReference>
<dbReference type="HAMAP" id="MF_00001">
    <property type="entry name" value="Asp_carb_tr"/>
    <property type="match status" value="1"/>
</dbReference>
<dbReference type="InterPro" id="IPR006132">
    <property type="entry name" value="Asp/Orn_carbamoyltranf_P-bd"/>
</dbReference>
<dbReference type="InterPro" id="IPR006130">
    <property type="entry name" value="Asp/Orn_carbamoylTrfase"/>
</dbReference>
<dbReference type="InterPro" id="IPR036901">
    <property type="entry name" value="Asp/Orn_carbamoylTrfase_sf"/>
</dbReference>
<dbReference type="InterPro" id="IPR002082">
    <property type="entry name" value="Asp_carbamoyltransf"/>
</dbReference>
<dbReference type="InterPro" id="IPR006131">
    <property type="entry name" value="Asp_carbamoyltransf_Asp/Orn-bd"/>
</dbReference>
<dbReference type="NCBIfam" id="TIGR00670">
    <property type="entry name" value="asp_carb_tr"/>
    <property type="match status" value="1"/>
</dbReference>
<dbReference type="NCBIfam" id="NF002032">
    <property type="entry name" value="PRK00856.1"/>
    <property type="match status" value="1"/>
</dbReference>
<dbReference type="PANTHER" id="PTHR45753:SF6">
    <property type="entry name" value="ASPARTATE CARBAMOYLTRANSFERASE"/>
    <property type="match status" value="1"/>
</dbReference>
<dbReference type="PANTHER" id="PTHR45753">
    <property type="entry name" value="ORNITHINE CARBAMOYLTRANSFERASE, MITOCHONDRIAL"/>
    <property type="match status" value="1"/>
</dbReference>
<dbReference type="Pfam" id="PF00185">
    <property type="entry name" value="OTCace"/>
    <property type="match status" value="1"/>
</dbReference>
<dbReference type="Pfam" id="PF02729">
    <property type="entry name" value="OTCace_N"/>
    <property type="match status" value="1"/>
</dbReference>
<dbReference type="PRINTS" id="PR00100">
    <property type="entry name" value="AOTCASE"/>
</dbReference>
<dbReference type="PRINTS" id="PR00101">
    <property type="entry name" value="ATCASE"/>
</dbReference>
<dbReference type="SUPFAM" id="SSF53671">
    <property type="entry name" value="Aspartate/ornithine carbamoyltransferase"/>
    <property type="match status" value="1"/>
</dbReference>
<dbReference type="PROSITE" id="PS00097">
    <property type="entry name" value="CARBAMOYLTRANSFERASE"/>
    <property type="match status" value="1"/>
</dbReference>
<gene>
    <name evidence="1" type="primary">pyrB</name>
    <name type="ordered locus">STK_14800</name>
</gene>
<sequence length="298" mass="34233">MKDIISVYDFSKSDFDELFELADKLRNMSTYPKILKEKTVALAFFEPSTRTYLSFNKAAINLGASTIGFSGEEGTSIAKGENLADTIRMLNNYADMIVIRHKFDGAAKFASEISEIPVINAGDGKHEHPTQTVIDFYTIYRNFKNIDGLTFGLMGDLRYARVVNSFLRALTRFKPKKVYLISPPQLSARKEILEELNYPYREVIDYNEVIEEIDVLYVTRIQKERFPDESEYEKVKESYVVDMNLVSKMKKDAIILHALPRVNEISREVDKTPQAKYFEQASYAVPVRMAIFHKIVGE</sequence>
<evidence type="ECO:0000255" key="1">
    <source>
        <dbReference type="HAMAP-Rule" id="MF_00001"/>
    </source>
</evidence>
<name>PYRB_SULTO</name>